<protein>
    <recommendedName>
        <fullName evidence="1">GPI-specific phospholipase A2-like PGAP3</fullName>
        <ecNumber evidence="1">3.1.1.-</ecNumber>
    </recommendedName>
    <alternativeName>
        <fullName>PER1-like domain-containing protein 1</fullName>
    </alternativeName>
    <alternativeName>
        <fullName>Post-GPI attachment to proteins factor 3</fullName>
    </alternativeName>
</protein>
<gene>
    <name evidence="4" type="primary">Pgap3</name>
    <name type="synonym">Perld1</name>
</gene>
<keyword id="KW-0025">Alternative splicing</keyword>
<keyword id="KW-0325">Glycoprotein</keyword>
<keyword id="KW-0333">Golgi apparatus</keyword>
<keyword id="KW-0337">GPI-anchor biosynthesis</keyword>
<keyword id="KW-0378">Hydrolase</keyword>
<keyword id="KW-0472">Membrane</keyword>
<keyword id="KW-1185">Reference proteome</keyword>
<keyword id="KW-0732">Signal</keyword>
<keyword id="KW-0812">Transmembrane</keyword>
<keyword id="KW-1133">Transmembrane helix</keyword>
<sequence>MAKRTAPLLLLTLAVGLAGGSQGDREPVYRDCVLRCEERNCSGDALKHFRSRQPIYMSLAGWTCRDDCKYECMWFTVGLYLQEGHRVPQFHGKWPFSRFLFIQEPASAVASLLNGLASLVMLCRYRASVPASSPMYHTCMAFAWVSLNAWFWSTVFHTRDTDLTEKMDYFCASAVILHSVYLCCVRTVGLQHPSVASAFGALLLLLLTGHISYLSLVHFDYGYNMMANVAIGLVNLAWWLVWCLRNRQRLPHTRRCMVVVVLLQGLSLLELLDFPPLFWVLDAHAIWHISTIPVHTLFFRFLEDDSLYLLKESGAMFKLD</sequence>
<feature type="signal peptide" evidence="2">
    <location>
        <begin position="1"/>
        <end position="23"/>
    </location>
</feature>
<feature type="chain" id="PRO_0000339357" description="GPI-specific phospholipase A2-like PGAP3">
    <location>
        <begin position="24"/>
        <end position="320"/>
    </location>
</feature>
<feature type="topological domain" description="Lumenal" evidence="2">
    <location>
        <begin position="24"/>
        <end position="98"/>
    </location>
</feature>
<feature type="transmembrane region" description="Helical" evidence="2">
    <location>
        <begin position="99"/>
        <end position="119"/>
    </location>
</feature>
<feature type="topological domain" description="Cytoplasmic" evidence="2">
    <location>
        <begin position="120"/>
        <end position="135"/>
    </location>
</feature>
<feature type="transmembrane region" description="Helical" evidence="2">
    <location>
        <begin position="136"/>
        <end position="156"/>
    </location>
</feature>
<feature type="topological domain" description="Lumenal" evidence="2">
    <location>
        <begin position="157"/>
        <end position="169"/>
    </location>
</feature>
<feature type="transmembrane region" description="Helical" evidence="2">
    <location>
        <begin position="170"/>
        <end position="190"/>
    </location>
</feature>
<feature type="topological domain" description="Cytoplasmic" evidence="2">
    <location>
        <begin position="191"/>
        <end position="198"/>
    </location>
</feature>
<feature type="transmembrane region" description="Helical" evidence="2">
    <location>
        <begin position="199"/>
        <end position="219"/>
    </location>
</feature>
<feature type="topological domain" description="Lumenal" evidence="2">
    <location>
        <begin position="220"/>
        <end position="223"/>
    </location>
</feature>
<feature type="transmembrane region" description="Helical" evidence="2">
    <location>
        <begin position="224"/>
        <end position="244"/>
    </location>
</feature>
<feature type="topological domain" description="Cytoplasmic" evidence="2">
    <location>
        <begin position="245"/>
        <end position="257"/>
    </location>
</feature>
<feature type="transmembrane region" description="Helical" evidence="2">
    <location>
        <begin position="258"/>
        <end position="278"/>
    </location>
</feature>
<feature type="topological domain" description="Lumenal" evidence="2">
    <location>
        <position position="279"/>
    </location>
</feature>
<feature type="transmembrane region" description="Helical" evidence="2">
    <location>
        <begin position="280"/>
        <end position="299"/>
    </location>
</feature>
<feature type="topological domain" description="Cytoplasmic" evidence="2">
    <location>
        <begin position="300"/>
        <end position="320"/>
    </location>
</feature>
<feature type="glycosylation site" description="N-linked (GlcNAc...) asparagine" evidence="2">
    <location>
        <position position="40"/>
    </location>
</feature>
<feature type="splice variant" id="VSP_034159" description="In isoform 2." evidence="3">
    <location>
        <begin position="94"/>
        <end position="144"/>
    </location>
</feature>
<feature type="sequence conflict" description="In Ref. 1; BAE42049." evidence="3" ref="1">
    <original>L</original>
    <variation>P</variation>
    <location>
        <position position="277"/>
    </location>
</feature>
<feature type="sequence conflict" description="In Ref. 1; BAE42049." evidence="3" ref="1">
    <original>L</original>
    <variation>P</variation>
    <location>
        <position position="281"/>
    </location>
</feature>
<name>PGAP3_MOUSE</name>
<organism>
    <name type="scientific">Mus musculus</name>
    <name type="common">Mouse</name>
    <dbReference type="NCBI Taxonomy" id="10090"/>
    <lineage>
        <taxon>Eukaryota</taxon>
        <taxon>Metazoa</taxon>
        <taxon>Chordata</taxon>
        <taxon>Craniata</taxon>
        <taxon>Vertebrata</taxon>
        <taxon>Euteleostomi</taxon>
        <taxon>Mammalia</taxon>
        <taxon>Eutheria</taxon>
        <taxon>Euarchontoglires</taxon>
        <taxon>Glires</taxon>
        <taxon>Rodentia</taxon>
        <taxon>Myomorpha</taxon>
        <taxon>Muroidea</taxon>
        <taxon>Muridae</taxon>
        <taxon>Murinae</taxon>
        <taxon>Mus</taxon>
        <taxon>Mus</taxon>
    </lineage>
</organism>
<reference key="1">
    <citation type="journal article" date="2005" name="Science">
        <title>The transcriptional landscape of the mammalian genome.</title>
        <authorList>
            <person name="Carninci P."/>
            <person name="Kasukawa T."/>
            <person name="Katayama S."/>
            <person name="Gough J."/>
            <person name="Frith M.C."/>
            <person name="Maeda N."/>
            <person name="Oyama R."/>
            <person name="Ravasi T."/>
            <person name="Lenhard B."/>
            <person name="Wells C."/>
            <person name="Kodzius R."/>
            <person name="Shimokawa K."/>
            <person name="Bajic V.B."/>
            <person name="Brenner S.E."/>
            <person name="Batalov S."/>
            <person name="Forrest A.R."/>
            <person name="Zavolan M."/>
            <person name="Davis M.J."/>
            <person name="Wilming L.G."/>
            <person name="Aidinis V."/>
            <person name="Allen J.E."/>
            <person name="Ambesi-Impiombato A."/>
            <person name="Apweiler R."/>
            <person name="Aturaliya R.N."/>
            <person name="Bailey T.L."/>
            <person name="Bansal M."/>
            <person name="Baxter L."/>
            <person name="Beisel K.W."/>
            <person name="Bersano T."/>
            <person name="Bono H."/>
            <person name="Chalk A.M."/>
            <person name="Chiu K.P."/>
            <person name="Choudhary V."/>
            <person name="Christoffels A."/>
            <person name="Clutterbuck D.R."/>
            <person name="Crowe M.L."/>
            <person name="Dalla E."/>
            <person name="Dalrymple B.P."/>
            <person name="de Bono B."/>
            <person name="Della Gatta G."/>
            <person name="di Bernardo D."/>
            <person name="Down T."/>
            <person name="Engstrom P."/>
            <person name="Fagiolini M."/>
            <person name="Faulkner G."/>
            <person name="Fletcher C.F."/>
            <person name="Fukushima T."/>
            <person name="Furuno M."/>
            <person name="Futaki S."/>
            <person name="Gariboldi M."/>
            <person name="Georgii-Hemming P."/>
            <person name="Gingeras T.R."/>
            <person name="Gojobori T."/>
            <person name="Green R.E."/>
            <person name="Gustincich S."/>
            <person name="Harbers M."/>
            <person name="Hayashi Y."/>
            <person name="Hensch T.K."/>
            <person name="Hirokawa N."/>
            <person name="Hill D."/>
            <person name="Huminiecki L."/>
            <person name="Iacono M."/>
            <person name="Ikeo K."/>
            <person name="Iwama A."/>
            <person name="Ishikawa T."/>
            <person name="Jakt M."/>
            <person name="Kanapin A."/>
            <person name="Katoh M."/>
            <person name="Kawasawa Y."/>
            <person name="Kelso J."/>
            <person name="Kitamura H."/>
            <person name="Kitano H."/>
            <person name="Kollias G."/>
            <person name="Krishnan S.P."/>
            <person name="Kruger A."/>
            <person name="Kummerfeld S.K."/>
            <person name="Kurochkin I.V."/>
            <person name="Lareau L.F."/>
            <person name="Lazarevic D."/>
            <person name="Lipovich L."/>
            <person name="Liu J."/>
            <person name="Liuni S."/>
            <person name="McWilliam S."/>
            <person name="Madan Babu M."/>
            <person name="Madera M."/>
            <person name="Marchionni L."/>
            <person name="Matsuda H."/>
            <person name="Matsuzawa S."/>
            <person name="Miki H."/>
            <person name="Mignone F."/>
            <person name="Miyake S."/>
            <person name="Morris K."/>
            <person name="Mottagui-Tabar S."/>
            <person name="Mulder N."/>
            <person name="Nakano N."/>
            <person name="Nakauchi H."/>
            <person name="Ng P."/>
            <person name="Nilsson R."/>
            <person name="Nishiguchi S."/>
            <person name="Nishikawa S."/>
            <person name="Nori F."/>
            <person name="Ohara O."/>
            <person name="Okazaki Y."/>
            <person name="Orlando V."/>
            <person name="Pang K.C."/>
            <person name="Pavan W.J."/>
            <person name="Pavesi G."/>
            <person name="Pesole G."/>
            <person name="Petrovsky N."/>
            <person name="Piazza S."/>
            <person name="Reed J."/>
            <person name="Reid J.F."/>
            <person name="Ring B.Z."/>
            <person name="Ringwald M."/>
            <person name="Rost B."/>
            <person name="Ruan Y."/>
            <person name="Salzberg S.L."/>
            <person name="Sandelin A."/>
            <person name="Schneider C."/>
            <person name="Schoenbach C."/>
            <person name="Sekiguchi K."/>
            <person name="Semple C.A."/>
            <person name="Seno S."/>
            <person name="Sessa L."/>
            <person name="Sheng Y."/>
            <person name="Shibata Y."/>
            <person name="Shimada H."/>
            <person name="Shimada K."/>
            <person name="Silva D."/>
            <person name="Sinclair B."/>
            <person name="Sperling S."/>
            <person name="Stupka E."/>
            <person name="Sugiura K."/>
            <person name="Sultana R."/>
            <person name="Takenaka Y."/>
            <person name="Taki K."/>
            <person name="Tammoja K."/>
            <person name="Tan S.L."/>
            <person name="Tang S."/>
            <person name="Taylor M.S."/>
            <person name="Tegner J."/>
            <person name="Teichmann S.A."/>
            <person name="Ueda H.R."/>
            <person name="van Nimwegen E."/>
            <person name="Verardo R."/>
            <person name="Wei C.L."/>
            <person name="Yagi K."/>
            <person name="Yamanishi H."/>
            <person name="Zabarovsky E."/>
            <person name="Zhu S."/>
            <person name="Zimmer A."/>
            <person name="Hide W."/>
            <person name="Bult C."/>
            <person name="Grimmond S.M."/>
            <person name="Teasdale R.D."/>
            <person name="Liu E.T."/>
            <person name="Brusic V."/>
            <person name="Quackenbush J."/>
            <person name="Wahlestedt C."/>
            <person name="Mattick J.S."/>
            <person name="Hume D.A."/>
            <person name="Kai C."/>
            <person name="Sasaki D."/>
            <person name="Tomaru Y."/>
            <person name="Fukuda S."/>
            <person name="Kanamori-Katayama M."/>
            <person name="Suzuki M."/>
            <person name="Aoki J."/>
            <person name="Arakawa T."/>
            <person name="Iida J."/>
            <person name="Imamura K."/>
            <person name="Itoh M."/>
            <person name="Kato T."/>
            <person name="Kawaji H."/>
            <person name="Kawagashira N."/>
            <person name="Kawashima T."/>
            <person name="Kojima M."/>
            <person name="Kondo S."/>
            <person name="Konno H."/>
            <person name="Nakano K."/>
            <person name="Ninomiya N."/>
            <person name="Nishio T."/>
            <person name="Okada M."/>
            <person name="Plessy C."/>
            <person name="Shibata K."/>
            <person name="Shiraki T."/>
            <person name="Suzuki S."/>
            <person name="Tagami M."/>
            <person name="Waki K."/>
            <person name="Watahiki A."/>
            <person name="Okamura-Oho Y."/>
            <person name="Suzuki H."/>
            <person name="Kawai J."/>
            <person name="Hayashizaki Y."/>
        </authorList>
    </citation>
    <scope>NUCLEOTIDE SEQUENCE [LARGE SCALE MRNA] (ISOFORM 1)</scope>
    <source>
        <strain>NOD</strain>
    </source>
</reference>
<reference key="2">
    <citation type="journal article" date="2009" name="PLoS Biol.">
        <title>Lineage-specific biology revealed by a finished genome assembly of the mouse.</title>
        <authorList>
            <person name="Church D.M."/>
            <person name="Goodstadt L."/>
            <person name="Hillier L.W."/>
            <person name="Zody M.C."/>
            <person name="Goldstein S."/>
            <person name="She X."/>
            <person name="Bult C.J."/>
            <person name="Agarwala R."/>
            <person name="Cherry J.L."/>
            <person name="DiCuccio M."/>
            <person name="Hlavina W."/>
            <person name="Kapustin Y."/>
            <person name="Meric P."/>
            <person name="Maglott D."/>
            <person name="Birtle Z."/>
            <person name="Marques A.C."/>
            <person name="Graves T."/>
            <person name="Zhou S."/>
            <person name="Teague B."/>
            <person name="Potamousis K."/>
            <person name="Churas C."/>
            <person name="Place M."/>
            <person name="Herschleb J."/>
            <person name="Runnheim R."/>
            <person name="Forrest D."/>
            <person name="Amos-Landgraf J."/>
            <person name="Schwartz D.C."/>
            <person name="Cheng Z."/>
            <person name="Lindblad-Toh K."/>
            <person name="Eichler E.E."/>
            <person name="Ponting C.P."/>
        </authorList>
    </citation>
    <scope>NUCLEOTIDE SEQUENCE [LARGE SCALE GENOMIC DNA]</scope>
    <source>
        <strain>C57BL/6J</strain>
    </source>
</reference>
<proteinExistence type="evidence at transcript level"/>
<evidence type="ECO:0000250" key="1">
    <source>
        <dbReference type="UniProtKB" id="A2V7M9"/>
    </source>
</evidence>
<evidence type="ECO:0000255" key="2"/>
<evidence type="ECO:0000305" key="3"/>
<evidence type="ECO:0000312" key="4">
    <source>
        <dbReference type="MGI" id="MGI:2444461"/>
    </source>
</evidence>
<comment type="function">
    <text evidence="1">Involved in the fatty acid remodeling steps of GPI-anchor maturation where the unsaturated acyl chain at sn-2 of inositol phosphate is replaced by a saturated stearoyl chain. May catalyze the first step of the fatty acid remodeling, by removing the unsaturated acyl chain at sn-2 of inositol phosphate, generating a lyso-GPI intermediate. The fatty acid remodeling steps is critical for the integration of GPI-APs into lipid rafts.</text>
</comment>
<comment type="subcellular location">
    <subcellularLocation>
        <location evidence="1">Golgi apparatus membrane</location>
        <topology evidence="2">Multi-pass membrane protein</topology>
    </subcellularLocation>
</comment>
<comment type="alternative products">
    <event type="alternative splicing"/>
    <isoform>
        <id>A2A559-1</id>
        <name>1</name>
        <sequence type="displayed"/>
    </isoform>
    <isoform>
        <id>A2A559-2</id>
        <name>2</name>
        <sequence type="described" ref="VSP_034159"/>
    </isoform>
</comment>
<comment type="similarity">
    <text evidence="3">Belongs to the PGAP3 family.</text>
</comment>
<dbReference type="EC" id="3.1.1.-" evidence="1"/>
<dbReference type="EMBL" id="AK170817">
    <property type="protein sequence ID" value="BAE42049.1"/>
    <property type="molecule type" value="mRNA"/>
</dbReference>
<dbReference type="EMBL" id="AL591390">
    <property type="status" value="NOT_ANNOTATED_CDS"/>
    <property type="molecule type" value="Genomic_DNA"/>
</dbReference>
<dbReference type="CCDS" id="CCDS25348.1">
    <molecule id="A2A559-1"/>
</dbReference>
<dbReference type="RefSeq" id="NP_001028709.2">
    <molecule id="A2A559-1"/>
    <property type="nucleotide sequence ID" value="NM_001033537.2"/>
</dbReference>
<dbReference type="RefSeq" id="XP_006533612.1">
    <molecule id="A2A559-2"/>
    <property type="nucleotide sequence ID" value="XM_006533549.4"/>
</dbReference>
<dbReference type="BioGRID" id="236192">
    <property type="interactions" value="3"/>
</dbReference>
<dbReference type="FunCoup" id="A2A559">
    <property type="interactions" value="593"/>
</dbReference>
<dbReference type="STRING" id="10090.ENSMUSP00000088337"/>
<dbReference type="GlyCosmos" id="A2A559">
    <property type="glycosylation" value="1 site, No reported glycans"/>
</dbReference>
<dbReference type="GlyGen" id="A2A559">
    <property type="glycosylation" value="1 site, 1 N-linked glycan (1 site)"/>
</dbReference>
<dbReference type="PaxDb" id="10090-ENSMUSP00000088337"/>
<dbReference type="ProteomicsDB" id="301798">
    <molecule id="A2A559-1"/>
</dbReference>
<dbReference type="ProteomicsDB" id="301799">
    <molecule id="A2A559-2"/>
</dbReference>
<dbReference type="Pumba" id="A2A559"/>
<dbReference type="Antibodypedia" id="16261">
    <property type="antibodies" value="187 antibodies from 24 providers"/>
</dbReference>
<dbReference type="DNASU" id="320655"/>
<dbReference type="Ensembl" id="ENSMUST00000090827.12">
    <molecule id="A2A559-1"/>
    <property type="protein sequence ID" value="ENSMUSP00000088337.6"/>
    <property type="gene ID" value="ENSMUSG00000038208.14"/>
</dbReference>
<dbReference type="Ensembl" id="ENSMUST00000128897.2">
    <molecule id="A2A559-2"/>
    <property type="protein sequence ID" value="ENSMUSP00000119668.2"/>
    <property type="gene ID" value="ENSMUSG00000038208.14"/>
</dbReference>
<dbReference type="GeneID" id="320655"/>
<dbReference type="KEGG" id="mmu:320655"/>
<dbReference type="UCSC" id="uc007lgh.1">
    <molecule id="A2A559-1"/>
    <property type="organism name" value="mouse"/>
</dbReference>
<dbReference type="AGR" id="MGI:2444461"/>
<dbReference type="CTD" id="93210"/>
<dbReference type="MGI" id="MGI:2444461">
    <property type="gene designation" value="Pgap3"/>
</dbReference>
<dbReference type="VEuPathDB" id="HostDB:ENSMUSG00000038208"/>
<dbReference type="eggNOG" id="KOG2970">
    <property type="taxonomic scope" value="Eukaryota"/>
</dbReference>
<dbReference type="GeneTree" id="ENSGT00390000001304"/>
<dbReference type="HOGENOM" id="CLU_032917_1_0_1"/>
<dbReference type="InParanoid" id="A2A559"/>
<dbReference type="OMA" id="DFMIEDC"/>
<dbReference type="OrthoDB" id="419770at2759"/>
<dbReference type="PhylomeDB" id="A2A559"/>
<dbReference type="TreeFam" id="TF300031"/>
<dbReference type="BioGRID-ORCS" id="320655">
    <property type="hits" value="5 hits in 80 CRISPR screens"/>
</dbReference>
<dbReference type="ChiTaRS" id="Pgap3">
    <property type="organism name" value="mouse"/>
</dbReference>
<dbReference type="PRO" id="PR:A2A559"/>
<dbReference type="Proteomes" id="UP000000589">
    <property type="component" value="Chromosome 11"/>
</dbReference>
<dbReference type="RNAct" id="A2A559">
    <property type="molecule type" value="protein"/>
</dbReference>
<dbReference type="Bgee" id="ENSMUSG00000038208">
    <property type="expression patterns" value="Expressed in retinal neural layer and 99 other cell types or tissues"/>
</dbReference>
<dbReference type="GO" id="GO:0005789">
    <property type="term" value="C:endoplasmic reticulum membrane"/>
    <property type="evidence" value="ECO:0000250"/>
    <property type="project" value="UniProtKB"/>
</dbReference>
<dbReference type="GO" id="GO:0000139">
    <property type="term" value="C:Golgi membrane"/>
    <property type="evidence" value="ECO:0007669"/>
    <property type="project" value="UniProtKB-SubCell"/>
</dbReference>
<dbReference type="GO" id="GO:0016788">
    <property type="term" value="F:hydrolase activity, acting on ester bonds"/>
    <property type="evidence" value="ECO:0000250"/>
    <property type="project" value="UniProtKB"/>
</dbReference>
<dbReference type="GO" id="GO:0006506">
    <property type="term" value="P:GPI anchor biosynthetic process"/>
    <property type="evidence" value="ECO:0007669"/>
    <property type="project" value="UniProtKB-KW"/>
</dbReference>
<dbReference type="GO" id="GO:0006505">
    <property type="term" value="P:GPI anchor metabolic process"/>
    <property type="evidence" value="ECO:0000250"/>
    <property type="project" value="UniProtKB"/>
</dbReference>
<dbReference type="InterPro" id="IPR007217">
    <property type="entry name" value="Per1-like"/>
</dbReference>
<dbReference type="PANTHER" id="PTHR13148">
    <property type="entry name" value="PER1-RELATED"/>
    <property type="match status" value="1"/>
</dbReference>
<dbReference type="PANTHER" id="PTHR13148:SF0">
    <property type="entry name" value="POST-GPI ATTACHMENT TO PROTEINS FACTOR 3"/>
    <property type="match status" value="1"/>
</dbReference>
<dbReference type="Pfam" id="PF04080">
    <property type="entry name" value="Per1"/>
    <property type="match status" value="1"/>
</dbReference>
<accession>A2A559</accession>
<accession>A2A558</accession>
<accession>Q3TCA8</accession>